<dbReference type="EMBL" id="AY781124">
    <property type="protein sequence ID" value="AAW29439.1"/>
    <property type="molecule type" value="mRNA"/>
</dbReference>
<dbReference type="SMR" id="Q5MJP3"/>
<dbReference type="GO" id="GO:0005615">
    <property type="term" value="C:extracellular space"/>
    <property type="evidence" value="ECO:0000250"/>
    <property type="project" value="UniProtKB"/>
</dbReference>
<dbReference type="GO" id="GO:0019871">
    <property type="term" value="F:sodium channel inhibitor activity"/>
    <property type="evidence" value="ECO:0007669"/>
    <property type="project" value="InterPro"/>
</dbReference>
<dbReference type="GO" id="GO:0090729">
    <property type="term" value="F:toxin activity"/>
    <property type="evidence" value="ECO:0007669"/>
    <property type="project" value="UniProtKB-KW"/>
</dbReference>
<dbReference type="FunFam" id="3.30.30.10:FF:000014">
    <property type="match status" value="1"/>
</dbReference>
<dbReference type="Gene3D" id="3.30.30.10">
    <property type="entry name" value="Knottin, scorpion toxin-like"/>
    <property type="match status" value="1"/>
</dbReference>
<dbReference type="InterPro" id="IPR044062">
    <property type="entry name" value="LCN-type_CS_alpha_beta_dom"/>
</dbReference>
<dbReference type="InterPro" id="IPR036574">
    <property type="entry name" value="Scorpion_toxin-like_sf"/>
</dbReference>
<dbReference type="InterPro" id="IPR002061">
    <property type="entry name" value="Scorpion_toxinL/defensin"/>
</dbReference>
<dbReference type="Pfam" id="PF00537">
    <property type="entry name" value="Toxin_3"/>
    <property type="match status" value="1"/>
</dbReference>
<dbReference type="SUPFAM" id="SSF57095">
    <property type="entry name" value="Scorpion toxin-like"/>
    <property type="match status" value="1"/>
</dbReference>
<dbReference type="PROSITE" id="PS51863">
    <property type="entry name" value="LCN_CSAB"/>
    <property type="match status" value="1"/>
</dbReference>
<evidence type="ECO:0000250" key="1"/>
<evidence type="ECO:0000250" key="2">
    <source>
        <dbReference type="UniProtKB" id="Q5MJP5"/>
    </source>
</evidence>
<evidence type="ECO:0000255" key="3">
    <source>
        <dbReference type="PROSITE-ProRule" id="PRU01210"/>
    </source>
</evidence>
<evidence type="ECO:0000269" key="4">
    <source>
    </source>
</evidence>
<evidence type="ECO:0000305" key="5"/>
<evidence type="ECO:0000312" key="6">
    <source>
        <dbReference type="EMBL" id="AAW29439.1"/>
    </source>
</evidence>
<accession>Q5MJP3</accession>
<organism>
    <name type="scientific">Anuroctonus phaiodactylus</name>
    <name type="common">Mafia scorpion</name>
    <dbReference type="NCBI Taxonomy" id="246982"/>
    <lineage>
        <taxon>Eukaryota</taxon>
        <taxon>Metazoa</taxon>
        <taxon>Ecdysozoa</taxon>
        <taxon>Arthropoda</taxon>
        <taxon>Chelicerata</taxon>
        <taxon>Arachnida</taxon>
        <taxon>Scorpiones</taxon>
        <taxon>Iurida</taxon>
        <taxon>Chactoidea</taxon>
        <taxon>Chactidae</taxon>
        <taxon>Uroctoninae</taxon>
        <taxon>Anuroctonus</taxon>
    </lineage>
</organism>
<comment type="function">
    <text evidence="1">Sodium channel (Nav) specific neurotoxin.</text>
</comment>
<comment type="subcellular location">
    <subcellularLocation>
        <location evidence="2">Secreted</location>
    </subcellularLocation>
</comment>
<comment type="tissue specificity">
    <text evidence="5">Expressed by the venom gland.</text>
</comment>
<comment type="domain">
    <text evidence="5">Has the structural arrangement of an alpha-helix connected to antiparallel beta-sheets by disulfide bonds (CS-alpha/beta).</text>
</comment>
<comment type="similarity">
    <text evidence="5">Belongs to the long (4 C-C) scorpion toxin superfamily. Sodium channel inhibitor family.</text>
</comment>
<protein>
    <recommendedName>
        <fullName>Phaiodotoxin-3</fullName>
    </recommendedName>
</protein>
<keyword id="KW-1015">Disulfide bond</keyword>
<keyword id="KW-0872">Ion channel impairing toxin</keyword>
<keyword id="KW-0528">Neurotoxin</keyword>
<keyword id="KW-0964">Secreted</keyword>
<keyword id="KW-0800">Toxin</keyword>
<keyword id="KW-0738">Voltage-gated sodium channel impairing toxin</keyword>
<reference evidence="5 6" key="1">
    <citation type="journal article" date="2004" name="Eur. J. Biochem.">
        <title>Phaiodotoxin, a novel structural class of insect-toxin isolated from the venom of the Mexican scorpion Anuroctonus phaiodactylus.</title>
        <authorList>
            <person name="Valdez-Cruz N.A."/>
            <person name="Batista C.V.F."/>
            <person name="Zamudio F.Z."/>
            <person name="Bosmans F."/>
            <person name="Tytgat J."/>
            <person name="Possani L.D."/>
        </authorList>
    </citation>
    <scope>NUCLEOTIDE SEQUENCE [MRNA]</scope>
    <source>
        <tissue evidence="4">Venom</tissue>
    </source>
</reference>
<sequence length="72" mass="7966">KFIRHKDESFYECGQSIGYQQYCVDACQAHGSKEKGYCKAMAPFGLPGGCYCPKLPSNRVKMCFGALESKCA</sequence>
<feature type="chain" id="PRO_0000066726" description="Phaiodotoxin-3">
    <location>
        <begin position="1" status="less than"/>
        <end position="72"/>
    </location>
</feature>
<feature type="domain" description="LCN-type CS-alpha/beta" evidence="3">
    <location>
        <begin position="1" status="less than"/>
        <end position="72"/>
    </location>
</feature>
<feature type="disulfide bond" evidence="3">
    <location>
        <begin position="13"/>
        <end position="38"/>
    </location>
</feature>
<feature type="disulfide bond" evidence="3">
    <location>
        <begin position="23"/>
        <end position="50"/>
    </location>
</feature>
<feature type="disulfide bond" evidence="3">
    <location>
        <begin position="27"/>
        <end position="52"/>
    </location>
</feature>
<feature type="disulfide bond" evidence="3">
    <location>
        <begin position="63"/>
        <end position="71"/>
    </location>
</feature>
<feature type="non-terminal residue" evidence="6">
    <location>
        <position position="1"/>
    </location>
</feature>
<proteinExistence type="evidence at transcript level"/>
<name>SCX3_ANUPH</name>
<gene>
    <name evidence="6" type="primary">phtx3</name>
</gene>